<accession>Q9LS06</accession>
<accession>Q8LAA3</accession>
<keyword id="KW-0010">Activator</keyword>
<keyword id="KW-0238">DNA-binding</keyword>
<keyword id="KW-0936">Ethylene signaling pathway</keyword>
<keyword id="KW-0539">Nucleus</keyword>
<keyword id="KW-1185">Reference proteome</keyword>
<keyword id="KW-0804">Transcription</keyword>
<keyword id="KW-0805">Transcription regulation</keyword>
<evidence type="ECO:0000250" key="1"/>
<evidence type="ECO:0000255" key="2">
    <source>
        <dbReference type="PROSITE-ProRule" id="PRU00326"/>
    </source>
</evidence>
<evidence type="ECO:0000255" key="3">
    <source>
        <dbReference type="PROSITE-ProRule" id="PRU00366"/>
    </source>
</evidence>
<evidence type="ECO:0000256" key="4">
    <source>
        <dbReference type="SAM" id="MobiDB-lite"/>
    </source>
</evidence>
<evidence type="ECO:0000305" key="5"/>
<gene>
    <name type="primary">ARF14</name>
    <name type="ordered locus">At3g25730</name>
    <name type="ORF">K13N2.14</name>
    <name type="ORF">K13N2.7</name>
</gene>
<reference key="1">
    <citation type="submission" date="2002-04" db="EMBL/GenBank/DDBJ databases">
        <title>Nucleotide sequence of the putative Arabidopsis ARF14.</title>
        <authorList>
            <person name="Carabelli M."/>
            <person name="Ciarbelli A.R."/>
            <person name="Ruzza V."/>
            <person name="Sessa G."/>
            <person name="Steindler C."/>
            <person name="Ruberti I."/>
        </authorList>
    </citation>
    <scope>NUCLEOTIDE SEQUENCE [MRNA]</scope>
    <source>
        <strain>cv. Columbia</strain>
    </source>
</reference>
<reference key="2">
    <citation type="journal article" date="2000" name="DNA Res.">
        <title>Structural analysis of Arabidopsis thaliana chromosome 3. I. Sequence features of the regions of 4,504,864 bp covered by sixty P1 and TAC clones.</title>
        <authorList>
            <person name="Sato S."/>
            <person name="Nakamura Y."/>
            <person name="Kaneko T."/>
            <person name="Katoh T."/>
            <person name="Asamizu E."/>
            <person name="Tabata S."/>
        </authorList>
    </citation>
    <scope>NUCLEOTIDE SEQUENCE [LARGE SCALE GENOMIC DNA]</scope>
    <source>
        <strain>cv. Columbia</strain>
    </source>
</reference>
<reference key="3">
    <citation type="journal article" date="2017" name="Plant J.">
        <title>Araport11: a complete reannotation of the Arabidopsis thaliana reference genome.</title>
        <authorList>
            <person name="Cheng C.Y."/>
            <person name="Krishnakumar V."/>
            <person name="Chan A.P."/>
            <person name="Thibaud-Nissen F."/>
            <person name="Schobel S."/>
            <person name="Town C.D."/>
        </authorList>
    </citation>
    <scope>GENOME REANNOTATION</scope>
    <source>
        <strain>cv. Columbia</strain>
    </source>
</reference>
<reference key="4">
    <citation type="submission" date="2006-07" db="EMBL/GenBank/DDBJ databases">
        <title>Large-scale analysis of RIKEN Arabidopsis full-length (RAFL) cDNAs.</title>
        <authorList>
            <person name="Totoki Y."/>
            <person name="Seki M."/>
            <person name="Ishida J."/>
            <person name="Nakajima M."/>
            <person name="Enju A."/>
            <person name="Kamiya A."/>
            <person name="Narusaka M."/>
            <person name="Shin-i T."/>
            <person name="Nakagawa M."/>
            <person name="Sakamoto N."/>
            <person name="Oishi K."/>
            <person name="Kohara Y."/>
            <person name="Kobayashi M."/>
            <person name="Toyoda A."/>
            <person name="Sakaki Y."/>
            <person name="Sakurai T."/>
            <person name="Iida K."/>
            <person name="Akiyama K."/>
            <person name="Satou M."/>
            <person name="Toyoda T."/>
            <person name="Konagaya A."/>
            <person name="Carninci P."/>
            <person name="Kawai J."/>
            <person name="Hayashizaki Y."/>
            <person name="Shinozaki K."/>
        </authorList>
    </citation>
    <scope>NUCLEOTIDE SEQUENCE [LARGE SCALE MRNA]</scope>
    <source>
        <strain>cv. Columbia</strain>
    </source>
</reference>
<reference key="5">
    <citation type="submission" date="2002-03" db="EMBL/GenBank/DDBJ databases">
        <title>Full-length cDNA from Arabidopsis thaliana.</title>
        <authorList>
            <person name="Brover V.V."/>
            <person name="Troukhan M.E."/>
            <person name="Alexandrov N.A."/>
            <person name="Lu Y.-P."/>
            <person name="Flavell R.B."/>
            <person name="Feldmann K.A."/>
        </authorList>
    </citation>
    <scope>NUCLEOTIDE SEQUENCE [LARGE SCALE MRNA]</scope>
</reference>
<reference key="6">
    <citation type="journal article" date="2006" name="Plant Physiol.">
        <title>Genome-wide analysis of the ERF gene family in Arabidopsis and rice.</title>
        <authorList>
            <person name="Nakano T."/>
            <person name="Suzuki K."/>
            <person name="Fujimura T."/>
            <person name="Shinshi H."/>
        </authorList>
    </citation>
    <scope>GENE FAMILY</scope>
    <scope>NOMENCLATURE</scope>
</reference>
<reference key="7">
    <citation type="journal article" date="2008" name="Trends Plant Sci.">
        <title>The plant B3 superfamily.</title>
        <authorList>
            <person name="Swaminathan K."/>
            <person name="Peterson K."/>
            <person name="Jack T."/>
        </authorList>
    </citation>
    <scope>GENE FAMILY</scope>
</reference>
<name>RAVL4_ARATH</name>
<feature type="chain" id="PRO_0000290436" description="AP2/ERF and B3 domain-containing transcription factor ARF14">
    <location>
        <begin position="1"/>
        <end position="333"/>
    </location>
</feature>
<feature type="DNA-binding region" description="AP2/ERF" evidence="3">
    <location>
        <begin position="61"/>
        <end position="116"/>
    </location>
</feature>
<feature type="DNA-binding region" description="TF-B3" evidence="2">
    <location>
        <begin position="183"/>
        <end position="289"/>
    </location>
</feature>
<feature type="region of interest" description="Disordered" evidence="4">
    <location>
        <begin position="1"/>
        <end position="27"/>
    </location>
</feature>
<feature type="compositionally biased region" description="Low complexity" evidence="4">
    <location>
        <begin position="1"/>
        <end position="16"/>
    </location>
</feature>
<feature type="sequence conflict" description="In Ref. 5; AAM65499." evidence="5" ref="5">
    <original>K</original>
    <variation>N</variation>
    <location>
        <position position="329"/>
    </location>
</feature>
<sequence length="333" mass="37756">MDAMSSVDESSTTTDSIPARKSSSPASLLYRMGSGTSVVLDSENGVEVEVEAESRKLPSSRFKGVVPQPNGRWGAQIYEKHQRVWLGTFNEEDEAARAYDVAAHRFRGRDAVTNFKDTTFEEEVEFLNAHSKSEIVDMLRKHTYKEELDQRKRNRDGNGKETTAFALASMVVMTGFKTAELLFEKTVTPSDVGKLNRLVIPKHQAEKHFPLPLGNNNVSVKGMLLNFEDVNGKVWRFRYSYWNSSQSYVLTKGWSRFVKEKRLCAGDLISFKRSNDQDQKFFIGWKSKSGLDLETGRVMRLFGVDISLNAVVVVKETTEVLMSSLRCKKQRVL</sequence>
<protein>
    <recommendedName>
        <fullName>AP2/ERF and B3 domain-containing transcription factor ARF14</fullName>
    </recommendedName>
    <alternativeName>
        <fullName>Protein AUXIN RESPONSE FACTOR 14</fullName>
    </alternativeName>
    <alternativeName>
        <fullName>RAV1-like ethylene-responsive transcription factor ARF14</fullName>
    </alternativeName>
</protein>
<organism>
    <name type="scientific">Arabidopsis thaliana</name>
    <name type="common">Mouse-ear cress</name>
    <dbReference type="NCBI Taxonomy" id="3702"/>
    <lineage>
        <taxon>Eukaryota</taxon>
        <taxon>Viridiplantae</taxon>
        <taxon>Streptophyta</taxon>
        <taxon>Embryophyta</taxon>
        <taxon>Tracheophyta</taxon>
        <taxon>Spermatophyta</taxon>
        <taxon>Magnoliopsida</taxon>
        <taxon>eudicotyledons</taxon>
        <taxon>Gunneridae</taxon>
        <taxon>Pentapetalae</taxon>
        <taxon>rosids</taxon>
        <taxon>malvids</taxon>
        <taxon>Brassicales</taxon>
        <taxon>Brassicaceae</taxon>
        <taxon>Camelineae</taxon>
        <taxon>Arabidopsis</taxon>
    </lineage>
</organism>
<proteinExistence type="evidence at transcript level"/>
<dbReference type="EMBL" id="AJ441073">
    <property type="protein sequence ID" value="CAD29641.1"/>
    <property type="molecule type" value="mRNA"/>
</dbReference>
<dbReference type="EMBL" id="AB028607">
    <property type="protein sequence ID" value="BAA95760.1"/>
    <property type="molecule type" value="Genomic_DNA"/>
</dbReference>
<dbReference type="EMBL" id="CP002686">
    <property type="protein sequence ID" value="AEE77062.1"/>
    <property type="molecule type" value="Genomic_DNA"/>
</dbReference>
<dbReference type="EMBL" id="AK229415">
    <property type="protein sequence ID" value="BAF01276.1"/>
    <property type="molecule type" value="mRNA"/>
</dbReference>
<dbReference type="EMBL" id="AY087951">
    <property type="protein sequence ID" value="AAM65499.1"/>
    <property type="molecule type" value="mRNA"/>
</dbReference>
<dbReference type="SMR" id="Q9LS06"/>
<dbReference type="FunCoup" id="Q9LS06">
    <property type="interactions" value="11"/>
</dbReference>
<dbReference type="IntAct" id="Q9LS06">
    <property type="interactions" value="1"/>
</dbReference>
<dbReference type="STRING" id="3702.Q9LS06"/>
<dbReference type="PaxDb" id="3702-AT3G25730.1"/>
<dbReference type="EnsemblPlants" id="AT3G25730.1">
    <property type="protein sequence ID" value="AT3G25730.1"/>
    <property type="gene ID" value="AT3G25730"/>
</dbReference>
<dbReference type="Gramene" id="AT3G25730.1">
    <property type="protein sequence ID" value="AT3G25730.1"/>
    <property type="gene ID" value="AT3G25730"/>
</dbReference>
<dbReference type="KEGG" id="ath:AT3G25730"/>
<dbReference type="Araport" id="AT3G25730"/>
<dbReference type="TAIR" id="AT3G25730">
    <property type="gene designation" value="EDF3"/>
</dbReference>
<dbReference type="eggNOG" id="ENOG502QRVI">
    <property type="taxonomic scope" value="Eukaryota"/>
</dbReference>
<dbReference type="HOGENOM" id="CLU_038898_0_0_1"/>
<dbReference type="InParanoid" id="Q9LS06"/>
<dbReference type="OMA" id="QLYIVWK"/>
<dbReference type="OrthoDB" id="2020802at2759"/>
<dbReference type="PhylomeDB" id="Q9LS06"/>
<dbReference type="PRO" id="PR:Q9LS06"/>
<dbReference type="Proteomes" id="UP000006548">
    <property type="component" value="Chromosome 3"/>
</dbReference>
<dbReference type="ExpressionAtlas" id="Q9LS06">
    <property type="expression patterns" value="baseline and differential"/>
</dbReference>
<dbReference type="GO" id="GO:0005634">
    <property type="term" value="C:nucleus"/>
    <property type="evidence" value="ECO:0007669"/>
    <property type="project" value="UniProtKB-SubCell"/>
</dbReference>
<dbReference type="GO" id="GO:0003700">
    <property type="term" value="F:DNA-binding transcription factor activity"/>
    <property type="evidence" value="ECO:0000250"/>
    <property type="project" value="TAIR"/>
</dbReference>
<dbReference type="GO" id="GO:0000976">
    <property type="term" value="F:transcription cis-regulatory region binding"/>
    <property type="evidence" value="ECO:0000353"/>
    <property type="project" value="TAIR"/>
</dbReference>
<dbReference type="GO" id="GO:0009873">
    <property type="term" value="P:ethylene-activated signaling pathway"/>
    <property type="evidence" value="ECO:0007669"/>
    <property type="project" value="UniProtKB-KW"/>
</dbReference>
<dbReference type="CDD" id="cd00018">
    <property type="entry name" value="AP2"/>
    <property type="match status" value="1"/>
</dbReference>
<dbReference type="CDD" id="cd10017">
    <property type="entry name" value="B3_DNA"/>
    <property type="match status" value="1"/>
</dbReference>
<dbReference type="FunFam" id="3.30.730.10:FF:000008">
    <property type="entry name" value="AP2 domain-containing protein RAP2.8"/>
    <property type="match status" value="1"/>
</dbReference>
<dbReference type="FunFam" id="2.40.330.10:FF:000007">
    <property type="entry name" value="AP2/ERF and B3 domain-containing transcription factor RAV1"/>
    <property type="match status" value="1"/>
</dbReference>
<dbReference type="Gene3D" id="3.30.730.10">
    <property type="entry name" value="AP2/ERF domain"/>
    <property type="match status" value="1"/>
</dbReference>
<dbReference type="Gene3D" id="2.40.330.10">
    <property type="entry name" value="DNA-binding pseudobarrel domain"/>
    <property type="match status" value="1"/>
</dbReference>
<dbReference type="InterPro" id="IPR001471">
    <property type="entry name" value="AP2/ERF_dom"/>
</dbReference>
<dbReference type="InterPro" id="IPR036955">
    <property type="entry name" value="AP2/ERF_dom_sf"/>
</dbReference>
<dbReference type="InterPro" id="IPR003340">
    <property type="entry name" value="B3_DNA-bd"/>
</dbReference>
<dbReference type="InterPro" id="IPR016177">
    <property type="entry name" value="DNA-bd_dom_sf"/>
</dbReference>
<dbReference type="InterPro" id="IPR015300">
    <property type="entry name" value="DNA-bd_pseudobarrel_sf"/>
</dbReference>
<dbReference type="InterPro" id="IPR044800">
    <property type="entry name" value="LEC2-like"/>
</dbReference>
<dbReference type="PANTHER" id="PTHR31140:SF72">
    <property type="entry name" value="AP2_ERF AND B3 DOMAIN-CONTAINING TRANSCRIPTION FACTOR ARF14"/>
    <property type="match status" value="1"/>
</dbReference>
<dbReference type="PANTHER" id="PTHR31140">
    <property type="entry name" value="B3 DOMAIN-CONTAINING TRANSCRIPTION FACTOR ABI3"/>
    <property type="match status" value="1"/>
</dbReference>
<dbReference type="Pfam" id="PF00847">
    <property type="entry name" value="AP2"/>
    <property type="match status" value="1"/>
</dbReference>
<dbReference type="Pfam" id="PF02362">
    <property type="entry name" value="B3"/>
    <property type="match status" value="1"/>
</dbReference>
<dbReference type="SMART" id="SM00380">
    <property type="entry name" value="AP2"/>
    <property type="match status" value="1"/>
</dbReference>
<dbReference type="SMART" id="SM01019">
    <property type="entry name" value="B3"/>
    <property type="match status" value="1"/>
</dbReference>
<dbReference type="SUPFAM" id="SSF54171">
    <property type="entry name" value="DNA-binding domain"/>
    <property type="match status" value="1"/>
</dbReference>
<dbReference type="SUPFAM" id="SSF101936">
    <property type="entry name" value="DNA-binding pseudobarrel domain"/>
    <property type="match status" value="1"/>
</dbReference>
<dbReference type="PROSITE" id="PS51032">
    <property type="entry name" value="AP2_ERF"/>
    <property type="match status" value="1"/>
</dbReference>
<dbReference type="PROSITE" id="PS50863">
    <property type="entry name" value="B3"/>
    <property type="match status" value="1"/>
</dbReference>
<comment type="function">
    <text evidence="1">Probably acts as a transcriptional activator. Binds to the GCC-box pathogenesis-related promoter element. May be involved in the regulation of gene expression by stress factors and by components of stress signal transduction pathways (By similarity).</text>
</comment>
<comment type="subcellular location">
    <subcellularLocation>
        <location evidence="5">Nucleus</location>
    </subcellularLocation>
</comment>
<comment type="similarity">
    <text evidence="5">Belongs to the AP2/ERF transcription factor family. RAV subfamily.</text>
</comment>